<evidence type="ECO:0000255" key="1">
    <source>
        <dbReference type="HAMAP-Rule" id="MF_01887"/>
    </source>
</evidence>
<reference key="1">
    <citation type="journal article" date="2003" name="J. Bacteriol.">
        <title>Comparative analyses of the complete genome sequences of Pierce's disease and citrus variegated chlorosis strains of Xylella fastidiosa.</title>
        <authorList>
            <person name="Van Sluys M.A."/>
            <person name="de Oliveira M.C."/>
            <person name="Monteiro-Vitorello C.B."/>
            <person name="Miyaki C.Y."/>
            <person name="Furlan L.R."/>
            <person name="Camargo L.E.A."/>
            <person name="da Silva A.C.R."/>
            <person name="Moon D.H."/>
            <person name="Takita M.A."/>
            <person name="Lemos E.G.M."/>
            <person name="Machado M.A."/>
            <person name="Ferro M.I.T."/>
            <person name="da Silva F.R."/>
            <person name="Goldman M.H.S."/>
            <person name="Goldman G.H."/>
            <person name="Lemos M.V.F."/>
            <person name="El-Dorry H."/>
            <person name="Tsai S.M."/>
            <person name="Carrer H."/>
            <person name="Carraro D.M."/>
            <person name="de Oliveira R.C."/>
            <person name="Nunes L.R."/>
            <person name="Siqueira W.J."/>
            <person name="Coutinho L.L."/>
            <person name="Kimura E.T."/>
            <person name="Ferro E.S."/>
            <person name="Harakava R."/>
            <person name="Kuramae E.E."/>
            <person name="Marino C.L."/>
            <person name="Giglioti E."/>
            <person name="Abreu I.L."/>
            <person name="Alves L.M.C."/>
            <person name="do Amaral A.M."/>
            <person name="Baia G.S."/>
            <person name="Blanco S.R."/>
            <person name="Brito M.S."/>
            <person name="Cannavan F.S."/>
            <person name="Celestino A.V."/>
            <person name="da Cunha A.F."/>
            <person name="Fenille R.C."/>
            <person name="Ferro J.A."/>
            <person name="Formighieri E.F."/>
            <person name="Kishi L.T."/>
            <person name="Leoni S.G."/>
            <person name="Oliveira A.R."/>
            <person name="Rosa V.E. Jr."/>
            <person name="Sassaki F.T."/>
            <person name="Sena J.A.D."/>
            <person name="de Souza A.A."/>
            <person name="Truffi D."/>
            <person name="Tsukumo F."/>
            <person name="Yanai G.M."/>
            <person name="Zaros L.G."/>
            <person name="Civerolo E.L."/>
            <person name="Simpson A.J.G."/>
            <person name="Almeida N.F. Jr."/>
            <person name="Setubal J.C."/>
            <person name="Kitajima J.P."/>
        </authorList>
    </citation>
    <scope>NUCLEOTIDE SEQUENCE [LARGE SCALE GENOMIC DNA]</scope>
    <source>
        <strain>Temecula1 / ATCC 700964</strain>
    </source>
</reference>
<accession>Q87D65</accession>
<dbReference type="EC" id="2.1.1.185" evidence="1"/>
<dbReference type="EMBL" id="AE009442">
    <property type="protein sequence ID" value="AAO28689.1"/>
    <property type="molecule type" value="Genomic_DNA"/>
</dbReference>
<dbReference type="RefSeq" id="WP_004091141.1">
    <property type="nucleotide sequence ID" value="NC_004556.1"/>
</dbReference>
<dbReference type="SMR" id="Q87D65"/>
<dbReference type="GeneID" id="93904608"/>
<dbReference type="KEGG" id="xft:PD_0821"/>
<dbReference type="HOGENOM" id="CLU_021322_0_1_6"/>
<dbReference type="Proteomes" id="UP000002516">
    <property type="component" value="Chromosome"/>
</dbReference>
<dbReference type="GO" id="GO:0005829">
    <property type="term" value="C:cytosol"/>
    <property type="evidence" value="ECO:0007669"/>
    <property type="project" value="TreeGrafter"/>
</dbReference>
<dbReference type="GO" id="GO:0003723">
    <property type="term" value="F:RNA binding"/>
    <property type="evidence" value="ECO:0007669"/>
    <property type="project" value="InterPro"/>
</dbReference>
<dbReference type="GO" id="GO:0070039">
    <property type="term" value="F:rRNA (guanosine-2'-O-)-methyltransferase activity"/>
    <property type="evidence" value="ECO:0007669"/>
    <property type="project" value="UniProtKB-UniRule"/>
</dbReference>
<dbReference type="CDD" id="cd18103">
    <property type="entry name" value="SpoU-like_RlmB"/>
    <property type="match status" value="1"/>
</dbReference>
<dbReference type="FunFam" id="3.40.1280.10:FF:000008">
    <property type="entry name" value="Group 3 RNA methyltransferase TrmH"/>
    <property type="match status" value="1"/>
</dbReference>
<dbReference type="Gene3D" id="3.30.1330.30">
    <property type="match status" value="1"/>
</dbReference>
<dbReference type="Gene3D" id="3.40.1280.10">
    <property type="match status" value="1"/>
</dbReference>
<dbReference type="HAMAP" id="MF_01887">
    <property type="entry name" value="23SrRNA_methyltr_B"/>
    <property type="match status" value="1"/>
</dbReference>
<dbReference type="InterPro" id="IPR024915">
    <property type="entry name" value="23S_rRNA_MeTrfase_RlmB"/>
</dbReference>
<dbReference type="InterPro" id="IPR029028">
    <property type="entry name" value="Alpha/beta_knot_MTases"/>
</dbReference>
<dbReference type="InterPro" id="IPR029064">
    <property type="entry name" value="Ribosomal_eL30-like_sf"/>
</dbReference>
<dbReference type="InterPro" id="IPR004441">
    <property type="entry name" value="rRNA_MeTrfase_TrmH"/>
</dbReference>
<dbReference type="InterPro" id="IPR001537">
    <property type="entry name" value="SpoU_MeTrfase"/>
</dbReference>
<dbReference type="InterPro" id="IPR013123">
    <property type="entry name" value="SpoU_subst-bd"/>
</dbReference>
<dbReference type="InterPro" id="IPR029026">
    <property type="entry name" value="tRNA_m1G_MTases_N"/>
</dbReference>
<dbReference type="NCBIfam" id="TIGR00186">
    <property type="entry name" value="rRNA_methyl_3"/>
    <property type="match status" value="1"/>
</dbReference>
<dbReference type="PANTHER" id="PTHR46429">
    <property type="entry name" value="23S RRNA (GUANOSINE-2'-O-)-METHYLTRANSFERASE RLMB"/>
    <property type="match status" value="1"/>
</dbReference>
<dbReference type="PANTHER" id="PTHR46429:SF1">
    <property type="entry name" value="23S RRNA (GUANOSINE-2'-O-)-METHYLTRANSFERASE RLMB"/>
    <property type="match status" value="1"/>
</dbReference>
<dbReference type="Pfam" id="PF00588">
    <property type="entry name" value="SpoU_methylase"/>
    <property type="match status" value="1"/>
</dbReference>
<dbReference type="Pfam" id="PF08032">
    <property type="entry name" value="SpoU_sub_bind"/>
    <property type="match status" value="1"/>
</dbReference>
<dbReference type="SMART" id="SM00967">
    <property type="entry name" value="SpoU_sub_bind"/>
    <property type="match status" value="1"/>
</dbReference>
<dbReference type="SUPFAM" id="SSF75217">
    <property type="entry name" value="alpha/beta knot"/>
    <property type="match status" value="1"/>
</dbReference>
<dbReference type="SUPFAM" id="SSF55315">
    <property type="entry name" value="L30e-like"/>
    <property type="match status" value="1"/>
</dbReference>
<keyword id="KW-0963">Cytoplasm</keyword>
<keyword id="KW-0489">Methyltransferase</keyword>
<keyword id="KW-1185">Reference proteome</keyword>
<keyword id="KW-0698">rRNA processing</keyword>
<keyword id="KW-0949">S-adenosyl-L-methionine</keyword>
<keyword id="KW-0808">Transferase</keyword>
<organism>
    <name type="scientific">Xylella fastidiosa (strain Temecula1 / ATCC 700964)</name>
    <dbReference type="NCBI Taxonomy" id="183190"/>
    <lineage>
        <taxon>Bacteria</taxon>
        <taxon>Pseudomonadati</taxon>
        <taxon>Pseudomonadota</taxon>
        <taxon>Gammaproteobacteria</taxon>
        <taxon>Lysobacterales</taxon>
        <taxon>Lysobacteraceae</taxon>
        <taxon>Xylella</taxon>
    </lineage>
</organism>
<comment type="function">
    <text evidence="1">Specifically methylates the ribose of guanosine 2251 in 23S rRNA.</text>
</comment>
<comment type="catalytic activity">
    <reaction evidence="1">
        <text>guanosine(2251) in 23S rRNA + S-adenosyl-L-methionine = 2'-O-methylguanosine(2251) in 23S rRNA + S-adenosyl-L-homocysteine + H(+)</text>
        <dbReference type="Rhea" id="RHEA:24140"/>
        <dbReference type="Rhea" id="RHEA-COMP:10239"/>
        <dbReference type="Rhea" id="RHEA-COMP:10241"/>
        <dbReference type="ChEBI" id="CHEBI:15378"/>
        <dbReference type="ChEBI" id="CHEBI:57856"/>
        <dbReference type="ChEBI" id="CHEBI:59789"/>
        <dbReference type="ChEBI" id="CHEBI:74269"/>
        <dbReference type="ChEBI" id="CHEBI:74445"/>
        <dbReference type="EC" id="2.1.1.185"/>
    </reaction>
</comment>
<comment type="subcellular location">
    <subcellularLocation>
        <location evidence="1">Cytoplasm</location>
    </subcellularLocation>
</comment>
<comment type="similarity">
    <text evidence="1">Belongs to the class IV-like SAM-binding methyltransferase superfamily. RNA methyltransferase TrmH family. RlmB subfamily.</text>
</comment>
<protein>
    <recommendedName>
        <fullName evidence="1">23S rRNA (guanosine-2'-O-)-methyltransferase RlmB</fullName>
        <ecNumber evidence="1">2.1.1.185</ecNumber>
    </recommendedName>
    <alternativeName>
        <fullName evidence="1">23S rRNA (guanosine2251 2'-O)-methyltransferase</fullName>
    </alternativeName>
    <alternativeName>
        <fullName evidence="1">23S rRNA Gm2251 2'-O-methyltransferase</fullName>
    </alternativeName>
</protein>
<proteinExistence type="inferred from homology"/>
<gene>
    <name evidence="1" type="primary">rlmB</name>
    <name type="ordered locus">PD_0821</name>
</gene>
<name>RLMB_XYLFT</name>
<sequence>MNKKNQWIVGINAVVSSIENDAEHVREVLVEAASKNSRLLDIEENARRKGIEVRRVTTQALDGVGGGVRHQGVAARYAAVRLWEEHDLKDLVDAAGGQALLLVLDGVQDPHNLGACLRSAAAAGVTAVIIPKDKSVGINATVRKTSSGAADRLPVIAVVNLARSLRELQKQDVWIYGLAGEVETSLYALDLRGNVALVLGGEADGLRRLTREHCDVLARIPMPGEVESLNVSVAAGVTLFEAVRQRTLV</sequence>
<feature type="chain" id="PRO_0000159812" description="23S rRNA (guanosine-2'-O-)-methyltransferase RlmB">
    <location>
        <begin position="1"/>
        <end position="249"/>
    </location>
</feature>
<feature type="binding site" evidence="1">
    <location>
        <position position="200"/>
    </location>
    <ligand>
        <name>S-adenosyl-L-methionine</name>
        <dbReference type="ChEBI" id="CHEBI:59789"/>
    </ligand>
</feature>
<feature type="binding site" evidence="1">
    <location>
        <position position="220"/>
    </location>
    <ligand>
        <name>S-adenosyl-L-methionine</name>
        <dbReference type="ChEBI" id="CHEBI:59789"/>
    </ligand>
</feature>
<feature type="binding site" evidence="1">
    <location>
        <position position="229"/>
    </location>
    <ligand>
        <name>S-adenosyl-L-methionine</name>
        <dbReference type="ChEBI" id="CHEBI:59789"/>
    </ligand>
</feature>